<evidence type="ECO:0000250" key="1">
    <source>
        <dbReference type="UniProtKB" id="Q2G1E1"/>
    </source>
</evidence>
<evidence type="ECO:0000255" key="2">
    <source>
        <dbReference type="PROSITE-ProRule" id="PRU00169"/>
    </source>
</evidence>
<evidence type="ECO:0000255" key="3">
    <source>
        <dbReference type="PROSITE-ProRule" id="PRU00593"/>
    </source>
</evidence>
<evidence type="ECO:0000305" key="4"/>
<protein>
    <recommendedName>
        <fullName>Transcriptional regulatory protein HptR</fullName>
    </recommendedName>
</protein>
<reference key="1">
    <citation type="journal article" date="2004" name="Proc. Natl. Acad. Sci. U.S.A.">
        <title>Complete genomes of two clinical Staphylococcus aureus strains: evidence for the rapid evolution of virulence and drug resistance.</title>
        <authorList>
            <person name="Holden M.T.G."/>
            <person name="Feil E.J."/>
            <person name="Lindsay J.A."/>
            <person name="Peacock S.J."/>
            <person name="Day N.P.J."/>
            <person name="Enright M.C."/>
            <person name="Foster T.J."/>
            <person name="Moore C.E."/>
            <person name="Hurst L."/>
            <person name="Atkin R."/>
            <person name="Barron A."/>
            <person name="Bason N."/>
            <person name="Bentley S.D."/>
            <person name="Chillingworth C."/>
            <person name="Chillingworth T."/>
            <person name="Churcher C."/>
            <person name="Clark L."/>
            <person name="Corton C."/>
            <person name="Cronin A."/>
            <person name="Doggett J."/>
            <person name="Dowd L."/>
            <person name="Feltwell T."/>
            <person name="Hance Z."/>
            <person name="Harris B."/>
            <person name="Hauser H."/>
            <person name="Holroyd S."/>
            <person name="Jagels K."/>
            <person name="James K.D."/>
            <person name="Lennard N."/>
            <person name="Line A."/>
            <person name="Mayes R."/>
            <person name="Moule S."/>
            <person name="Mungall K."/>
            <person name="Ormond D."/>
            <person name="Quail M.A."/>
            <person name="Rabbinowitsch E."/>
            <person name="Rutherford K.M."/>
            <person name="Sanders M."/>
            <person name="Sharp S."/>
            <person name="Simmonds M."/>
            <person name="Stevens K."/>
            <person name="Whitehead S."/>
            <person name="Barrell B.G."/>
            <person name="Spratt B.G."/>
            <person name="Parkhill J."/>
        </authorList>
    </citation>
    <scope>NUCLEOTIDE SEQUENCE [LARGE SCALE GENOMIC DNA]</scope>
    <source>
        <strain>MSSA476</strain>
    </source>
</reference>
<keyword id="KW-0963">Cytoplasm</keyword>
<keyword id="KW-0238">DNA-binding</keyword>
<keyword id="KW-0597">Phosphoprotein</keyword>
<keyword id="KW-0804">Transcription</keyword>
<keyword id="KW-0805">Transcription regulation</keyword>
<keyword id="KW-0902">Two-component regulatory system</keyword>
<sequence>MFKVVICDDERIIREGLKQIIPWGDYHFNTIYTAKDGVEALSLIQQHQPELVITDIRMPRKNGVDLLNDIAHLDCNVIILSSYDDFEYMKAGIQHHVLDYLLKPVDHAQLEVILGRLVRTLLEQQSQNGRSLASCHDAFQPLLKVEYDDYYVNQIVDQIKQSYQTKVTVSDLIQHIDVSESYAMRTFKDHVGITIVDYLNRYRILQSLQLLDRHYKHYEIADKVGFSEYKMFSYHFKKYLQMSPSDYCKQAK</sequence>
<gene>
    <name type="primary">hptR</name>
    <name type="ordered locus">SAS0198</name>
</gene>
<feature type="chain" id="PRO_0000299111" description="Transcriptional regulatory protein HptR">
    <location>
        <begin position="1"/>
        <end position="252"/>
    </location>
</feature>
<feature type="domain" description="Response regulatory" evidence="2">
    <location>
        <begin position="3"/>
        <end position="118"/>
    </location>
</feature>
<feature type="domain" description="HTH araC/xylS-type" evidence="3">
    <location>
        <begin position="153"/>
        <end position="250"/>
    </location>
</feature>
<feature type="DNA-binding region" description="H-T-H motif" evidence="3">
    <location>
        <begin position="170"/>
        <end position="191"/>
    </location>
</feature>
<feature type="DNA-binding region" description="H-T-H motif" evidence="3">
    <location>
        <begin position="217"/>
        <end position="240"/>
    </location>
</feature>
<feature type="modified residue" description="4-aspartylphosphate" evidence="2">
    <location>
        <position position="55"/>
    </location>
</feature>
<organism>
    <name type="scientific">Staphylococcus aureus (strain MSSA476)</name>
    <dbReference type="NCBI Taxonomy" id="282459"/>
    <lineage>
        <taxon>Bacteria</taxon>
        <taxon>Bacillati</taxon>
        <taxon>Bacillota</taxon>
        <taxon>Bacilli</taxon>
        <taxon>Bacillales</taxon>
        <taxon>Staphylococcaceae</taxon>
        <taxon>Staphylococcus</taxon>
    </lineage>
</organism>
<comment type="function">
    <text evidence="1">Member of the two-component regulatory system HptS/HptR that regulates genes involved in hexose phosphate transport system in response to changes in extracellular phosphate sources. Activates uhpT expression to facilitate glucose-6-phosphate/G6P utilization by directly binding to its promoter. Antagonizes CcpA-dependent transcription of a subset of CcpA-regulated genes involved in antibiotic susceptibility.</text>
</comment>
<comment type="subcellular location">
    <subcellularLocation>
        <location evidence="4">Cytoplasm</location>
    </subcellularLocation>
</comment>
<comment type="PTM">
    <text evidence="1">Phosphorylated by HptS.</text>
</comment>
<name>HPTR_STAAS</name>
<dbReference type="EMBL" id="BX571857">
    <property type="protein sequence ID" value="CAG41966.1"/>
    <property type="molecule type" value="Genomic_DNA"/>
</dbReference>
<dbReference type="RefSeq" id="WP_000477521.1">
    <property type="nucleotide sequence ID" value="NC_002953.3"/>
</dbReference>
<dbReference type="SMR" id="Q6GCQ3"/>
<dbReference type="KEGG" id="sas:SAS0198"/>
<dbReference type="HOGENOM" id="CLU_000445_5_1_9"/>
<dbReference type="GO" id="GO:0005737">
    <property type="term" value="C:cytoplasm"/>
    <property type="evidence" value="ECO:0007669"/>
    <property type="project" value="UniProtKB-SubCell"/>
</dbReference>
<dbReference type="GO" id="GO:0003700">
    <property type="term" value="F:DNA-binding transcription factor activity"/>
    <property type="evidence" value="ECO:0007669"/>
    <property type="project" value="InterPro"/>
</dbReference>
<dbReference type="GO" id="GO:0043565">
    <property type="term" value="F:sequence-specific DNA binding"/>
    <property type="evidence" value="ECO:0007669"/>
    <property type="project" value="InterPro"/>
</dbReference>
<dbReference type="GO" id="GO:0000160">
    <property type="term" value="P:phosphorelay signal transduction system"/>
    <property type="evidence" value="ECO:0007669"/>
    <property type="project" value="UniProtKB-KW"/>
</dbReference>
<dbReference type="CDD" id="cd17536">
    <property type="entry name" value="REC_YesN-like"/>
    <property type="match status" value="1"/>
</dbReference>
<dbReference type="Gene3D" id="3.40.50.2300">
    <property type="match status" value="1"/>
</dbReference>
<dbReference type="Gene3D" id="1.10.10.60">
    <property type="entry name" value="Homeodomain-like"/>
    <property type="match status" value="2"/>
</dbReference>
<dbReference type="InterPro" id="IPR011006">
    <property type="entry name" value="CheY-like_superfamily"/>
</dbReference>
<dbReference type="InterPro" id="IPR009057">
    <property type="entry name" value="Homeodomain-like_sf"/>
</dbReference>
<dbReference type="InterPro" id="IPR051552">
    <property type="entry name" value="HptR"/>
</dbReference>
<dbReference type="InterPro" id="IPR018060">
    <property type="entry name" value="HTH_AraC"/>
</dbReference>
<dbReference type="InterPro" id="IPR001789">
    <property type="entry name" value="Sig_transdc_resp-reg_receiver"/>
</dbReference>
<dbReference type="PANTHER" id="PTHR42713">
    <property type="entry name" value="HISTIDINE KINASE-RELATED"/>
    <property type="match status" value="1"/>
</dbReference>
<dbReference type="PANTHER" id="PTHR42713:SF3">
    <property type="entry name" value="TRANSCRIPTIONAL REGULATORY PROTEIN HPTR"/>
    <property type="match status" value="1"/>
</dbReference>
<dbReference type="Pfam" id="PF12833">
    <property type="entry name" value="HTH_18"/>
    <property type="match status" value="1"/>
</dbReference>
<dbReference type="Pfam" id="PF00072">
    <property type="entry name" value="Response_reg"/>
    <property type="match status" value="1"/>
</dbReference>
<dbReference type="SMART" id="SM00342">
    <property type="entry name" value="HTH_ARAC"/>
    <property type="match status" value="1"/>
</dbReference>
<dbReference type="SMART" id="SM00448">
    <property type="entry name" value="REC"/>
    <property type="match status" value="1"/>
</dbReference>
<dbReference type="SUPFAM" id="SSF52172">
    <property type="entry name" value="CheY-like"/>
    <property type="match status" value="1"/>
</dbReference>
<dbReference type="SUPFAM" id="SSF46689">
    <property type="entry name" value="Homeodomain-like"/>
    <property type="match status" value="2"/>
</dbReference>
<dbReference type="PROSITE" id="PS01124">
    <property type="entry name" value="HTH_ARAC_FAMILY_2"/>
    <property type="match status" value="1"/>
</dbReference>
<dbReference type="PROSITE" id="PS50110">
    <property type="entry name" value="RESPONSE_REGULATORY"/>
    <property type="match status" value="1"/>
</dbReference>
<accession>Q6GCQ3</accession>
<proteinExistence type="inferred from homology"/>